<sequence>MWNPSAGPNPYPPQVVCPGGSNPACPPSQNPAFPPGPCPPGIPQGNPAFPPCRPPYPVPQPGCPGYQPSGPYPPPYPPAAPGMCPVNPPAPGMVGPGIVIDKKTRKKMKKAHKKSHKHHKHGKHSSSSSSSSSSSSDSD</sequence>
<protein>
    <recommendedName>
        <fullName>Proline-rich protein 13</fullName>
    </recommendedName>
</protein>
<comment type="function">
    <text evidence="1">Negatively regulates TSP1 expression at the level of transcription. This down-regulation was shown to reduce taxane-induced apoptosis (By similarity).</text>
</comment>
<comment type="subcellular location">
    <subcellularLocation>
        <location evidence="1">Nucleus</location>
    </subcellularLocation>
</comment>
<evidence type="ECO:0000250" key="1"/>
<evidence type="ECO:0000256" key="2">
    <source>
        <dbReference type="SAM" id="MobiDB-lite"/>
    </source>
</evidence>
<organism>
    <name type="scientific">Rattus norvegicus</name>
    <name type="common">Rat</name>
    <dbReference type="NCBI Taxonomy" id="10116"/>
    <lineage>
        <taxon>Eukaryota</taxon>
        <taxon>Metazoa</taxon>
        <taxon>Chordata</taxon>
        <taxon>Craniata</taxon>
        <taxon>Vertebrata</taxon>
        <taxon>Euteleostomi</taxon>
        <taxon>Mammalia</taxon>
        <taxon>Eutheria</taxon>
        <taxon>Euarchontoglires</taxon>
        <taxon>Glires</taxon>
        <taxon>Rodentia</taxon>
        <taxon>Myomorpha</taxon>
        <taxon>Muroidea</taxon>
        <taxon>Muridae</taxon>
        <taxon>Murinae</taxon>
        <taxon>Rattus</taxon>
    </lineage>
</organism>
<accession>Q5U1W2</accession>
<name>PRR13_RAT</name>
<proteinExistence type="evidence at transcript level"/>
<reference key="1">
    <citation type="journal article" date="2004" name="Genome Res.">
        <title>The status, quality, and expansion of the NIH full-length cDNA project: the Mammalian Gene Collection (MGC).</title>
        <authorList>
            <consortium name="The MGC Project Team"/>
        </authorList>
    </citation>
    <scope>NUCLEOTIDE SEQUENCE [LARGE SCALE MRNA]</scope>
    <source>
        <tissue>Ovary</tissue>
    </source>
</reference>
<dbReference type="EMBL" id="BC086446">
    <property type="protein sequence ID" value="AAH86446.1"/>
    <property type="molecule type" value="mRNA"/>
</dbReference>
<dbReference type="RefSeq" id="NP_001008380.1">
    <property type="nucleotide sequence ID" value="NM_001008379.1"/>
</dbReference>
<dbReference type="FunCoup" id="Q5U1W2">
    <property type="interactions" value="55"/>
</dbReference>
<dbReference type="STRING" id="10116.ENSRNOP00000048789"/>
<dbReference type="PhosphoSitePlus" id="Q5U1W2"/>
<dbReference type="PaxDb" id="10116-ENSRNOP00000048789"/>
<dbReference type="Ensembl" id="ENSRNOT00000113574.1">
    <property type="protein sequence ID" value="ENSRNOP00000091219.1"/>
    <property type="gene ID" value="ENSRNOG00000042094.4"/>
</dbReference>
<dbReference type="GeneID" id="363004"/>
<dbReference type="KEGG" id="rno:363004"/>
<dbReference type="UCSC" id="RGD:1307129">
    <property type="organism name" value="rat"/>
</dbReference>
<dbReference type="AGR" id="RGD:1307129"/>
<dbReference type="CTD" id="54458"/>
<dbReference type="RGD" id="1307129">
    <property type="gene designation" value="Prr13"/>
</dbReference>
<dbReference type="eggNOG" id="ENOG502R4RR">
    <property type="taxonomic scope" value="Eukaryota"/>
</dbReference>
<dbReference type="GeneTree" id="ENSGT00730000113467"/>
<dbReference type="HOGENOM" id="CLU_140437_0_0_1"/>
<dbReference type="InParanoid" id="Q5U1W2"/>
<dbReference type="OrthoDB" id="97421at9989"/>
<dbReference type="PRO" id="PR:Q5U1W2"/>
<dbReference type="Proteomes" id="UP000002494">
    <property type="component" value="Chromosome 7"/>
</dbReference>
<dbReference type="Bgee" id="ENSRNOG00000042094">
    <property type="expression patterns" value="Expressed in duodenum and 20 other cell types or tissues"/>
</dbReference>
<dbReference type="ExpressionAtlas" id="Q5U1W2">
    <property type="expression patterns" value="baseline and differential"/>
</dbReference>
<dbReference type="GO" id="GO:0005654">
    <property type="term" value="C:nucleoplasm"/>
    <property type="evidence" value="ECO:0000318"/>
    <property type="project" value="GO_Central"/>
</dbReference>
<dbReference type="PANTHER" id="PTHR36287">
    <property type="match status" value="1"/>
</dbReference>
<dbReference type="PANTHER" id="PTHR36287:SF1">
    <property type="entry name" value="PROLINE-RICH PROTEIN 13"/>
    <property type="match status" value="1"/>
</dbReference>
<gene>
    <name type="primary">Prr13</name>
</gene>
<keyword id="KW-0539">Nucleus</keyword>
<keyword id="KW-1185">Reference proteome</keyword>
<keyword id="KW-0804">Transcription</keyword>
<keyword id="KW-0805">Transcription regulation</keyword>
<feature type="chain" id="PRO_0000243948" description="Proline-rich protein 13">
    <location>
        <begin position="1"/>
        <end position="139"/>
    </location>
</feature>
<feature type="region of interest" description="Disordered" evidence="2">
    <location>
        <begin position="1"/>
        <end position="139"/>
    </location>
</feature>
<feature type="compositionally biased region" description="Pro residues" evidence="2">
    <location>
        <begin position="24"/>
        <end position="62"/>
    </location>
</feature>
<feature type="compositionally biased region" description="Pro residues" evidence="2">
    <location>
        <begin position="70"/>
        <end position="91"/>
    </location>
</feature>
<feature type="compositionally biased region" description="Basic residues" evidence="2">
    <location>
        <begin position="103"/>
        <end position="124"/>
    </location>
</feature>
<feature type="compositionally biased region" description="Low complexity" evidence="2">
    <location>
        <begin position="125"/>
        <end position="139"/>
    </location>
</feature>